<comment type="function">
    <text evidence="1">Self assembles to form a helical capsid wrapping up the viral genomic DNA. The capsid displays a filamentous structure with a length of 760-1950 nm and a width of 6-8 nm. The virion assembly and budding take place at the host inner membrane (By similarity).</text>
</comment>
<comment type="subunit">
    <text evidence="1">Homomultimerizes. There are several thousands of this protein in the phage capsid (By similarity).</text>
</comment>
<comment type="subcellular location">
    <subcellularLocation>
        <location evidence="4">Virion</location>
    </subcellularLocation>
    <subcellularLocation>
        <location>Host membrane</location>
        <topology>Single-pass type I membrane protein</topology>
    </subcellularLocation>
    <text evidence="1">prior to assembly, the major capsid protein is found associated with the bacterial host inner membrane.</text>
</comment>
<comment type="similarity">
    <text evidence="4">Belongs to the inovirus capsid protein family.</text>
</comment>
<reference key="1">
    <citation type="submission" date="1993-10" db="EMBL/GenBank/DDBJ databases">
        <title>DNA sequence of the filamentous coliphage If1.</title>
        <authorList>
            <person name="Hill D.F."/>
            <person name="Hughes G."/>
            <person name="McNaughton J.C."/>
            <person name="Stockwell P.A."/>
            <person name="Petersen G.B."/>
        </authorList>
    </citation>
    <scope>NUCLEOTIDE SEQUENCE [GENOMIC DNA]</scope>
</reference>
<reference key="2">
    <citation type="journal article" date="1981" name="J. Biol. Chem.">
        <title>Primary structure of the major coat protein of the filamentous bacterial viruses, If1 and Ike.</title>
        <authorList>
            <person name="Nakashima Y."/>
            <person name="Frangione B."/>
            <person name="Wiseman R.L."/>
            <person name="Konigsberg W.H."/>
        </authorList>
    </citation>
    <scope>PROTEIN SEQUENCE OF 24-74</scope>
</reference>
<reference key="3">
    <citation type="journal article" date="1994" name="J. Mol. Biol.">
        <title>Molecular models and structural comparisons of native and mutant class I filamentous bacteriophages Ff (fd, f1, M13), If1 and IKe.</title>
        <authorList>
            <person name="Marvin D.A."/>
            <person name="Hale R.D."/>
            <person name="Nave C."/>
            <person name="Citterich M.H."/>
        </authorList>
    </citation>
    <scope>X-RAY CRYSTALLOGRAPHY (5.0 ANGSTROMS)</scope>
</reference>
<name>CAPSD_BPIF1</name>
<organismHost>
    <name type="scientific">Escherichia coli</name>
    <dbReference type="NCBI Taxonomy" id="562"/>
</organismHost>
<organism>
    <name type="scientific">Escherichia phage If1</name>
    <name type="common">Bacteriophage If1</name>
    <dbReference type="NCBI Taxonomy" id="10868"/>
    <lineage>
        <taxon>Viruses</taxon>
        <taxon>Monodnaviria</taxon>
        <taxon>Loebvirae</taxon>
        <taxon>Hofneiviricota</taxon>
        <taxon>Faserviricetes</taxon>
        <taxon>Tubulavirales</taxon>
        <taxon>Inoviridae</taxon>
        <taxon>Infulavirus</taxon>
        <taxon>Infulavirus If1</taxon>
    </lineage>
</organism>
<proteinExistence type="evidence at protein level"/>
<feature type="signal peptide" evidence="3">
    <location>
        <begin position="1"/>
        <end position="23"/>
    </location>
</feature>
<feature type="chain" id="PRO_0000003300" description="Capsid protein G8P">
    <location>
        <begin position="24"/>
        <end position="74"/>
    </location>
</feature>
<feature type="topological domain" description="Periplasmic">
    <location>
        <begin position="24"/>
        <end position="45"/>
    </location>
</feature>
<feature type="transmembrane region" description="Helical" evidence="2">
    <location>
        <begin position="46"/>
        <end position="66"/>
    </location>
</feature>
<feature type="topological domain" description="Cytoplasmic">
    <location>
        <begin position="67"/>
        <end position="74"/>
    </location>
</feature>
<dbReference type="EMBL" id="U02303">
    <property type="protein sequence ID" value="AAC62154.1"/>
    <property type="molecule type" value="Genomic_DNA"/>
</dbReference>
<dbReference type="PIR" id="A04227">
    <property type="entry name" value="VCBPIF"/>
</dbReference>
<dbReference type="RefSeq" id="NP_047355.1">
    <property type="nucleotide sequence ID" value="NC_001954.1"/>
</dbReference>
<dbReference type="PDB" id="1IFK">
    <property type="method" value="Fiber"/>
    <property type="resolution" value="5.00 A"/>
    <property type="chains" value="A=24-74"/>
</dbReference>
<dbReference type="PDBsum" id="1IFK"/>
<dbReference type="SMR" id="P03619"/>
<dbReference type="GeneID" id="1261854"/>
<dbReference type="KEGG" id="vg:1261854"/>
<dbReference type="EvolutionaryTrace" id="P03619"/>
<dbReference type="Proteomes" id="UP000001833">
    <property type="component" value="Genome"/>
</dbReference>
<dbReference type="GO" id="GO:0019029">
    <property type="term" value="C:helical viral capsid"/>
    <property type="evidence" value="ECO:0007669"/>
    <property type="project" value="UniProtKB-KW"/>
</dbReference>
<dbReference type="GO" id="GO:0033644">
    <property type="term" value="C:host cell membrane"/>
    <property type="evidence" value="ECO:0007669"/>
    <property type="project" value="UniProtKB-SubCell"/>
</dbReference>
<dbReference type="GO" id="GO:0016020">
    <property type="term" value="C:membrane"/>
    <property type="evidence" value="ECO:0007669"/>
    <property type="project" value="UniProtKB-KW"/>
</dbReference>
<dbReference type="Gene3D" id="1.20.5.80">
    <property type="match status" value="1"/>
</dbReference>
<dbReference type="InterPro" id="IPR008020">
    <property type="entry name" value="G8P"/>
</dbReference>
<dbReference type="InterPro" id="IPR023390">
    <property type="entry name" value="Phage_M13_G8P_capsid_dom_sf"/>
</dbReference>
<dbReference type="Pfam" id="PF19199">
    <property type="entry name" value="Phage_coatGP8"/>
    <property type="match status" value="1"/>
</dbReference>
<dbReference type="PIRSF" id="PIRSF004117">
    <property type="entry name" value="Phage_coat_B"/>
    <property type="match status" value="1"/>
</dbReference>
<dbReference type="SUPFAM" id="SSF57987">
    <property type="entry name" value="Inovirus (filamentous phage) major coat protein"/>
    <property type="match status" value="1"/>
</dbReference>
<sequence>MKKSVVAKIIAGSTLVIGSSAFAADDATSQAKAAFDSLTAQATEMSGYAWALVVLVVGATVGIKLFKKFVSRAS</sequence>
<accession>P03619</accession>
<keyword id="KW-0002">3D-structure</keyword>
<keyword id="KW-0167">Capsid protein</keyword>
<keyword id="KW-0903">Direct protein sequencing</keyword>
<keyword id="KW-1139">Helical capsid protein</keyword>
<keyword id="KW-1043">Host membrane</keyword>
<keyword id="KW-0472">Membrane</keyword>
<keyword id="KW-1185">Reference proteome</keyword>
<keyword id="KW-0732">Signal</keyword>
<keyword id="KW-0812">Transmembrane</keyword>
<keyword id="KW-1133">Transmembrane helix</keyword>
<keyword id="KW-0946">Virion</keyword>
<evidence type="ECO:0000250" key="1"/>
<evidence type="ECO:0000255" key="2"/>
<evidence type="ECO:0000269" key="3">
    <source>
    </source>
</evidence>
<evidence type="ECO:0000305" key="4"/>
<gene>
    <name type="primary">VIII</name>
</gene>
<protein>
    <recommendedName>
        <fullName>Capsid protein G8P</fullName>
    </recommendedName>
    <alternativeName>
        <fullName>Coat protein B</fullName>
    </alternativeName>
    <alternativeName>
        <fullName>Gene 8 protein</fullName>
        <shortName>G8P</shortName>
    </alternativeName>
    <alternativeName>
        <fullName>Major coat protein</fullName>
    </alternativeName>
</protein>